<accession>P68218</accession>
<accession>P14454</accession>
<sequence length="18" mass="1834">TDPDADKGEFLAEGGGVR</sequence>
<evidence type="ECO:0000250" key="1">
    <source>
        <dbReference type="UniProtKB" id="E9PV24"/>
    </source>
</evidence>
<evidence type="ECO:0000250" key="2">
    <source>
        <dbReference type="UniProtKB" id="P02671"/>
    </source>
</evidence>
<dbReference type="GO" id="GO:0005576">
    <property type="term" value="C:extracellular region"/>
    <property type="evidence" value="ECO:0007669"/>
    <property type="project" value="UniProtKB-SubCell"/>
</dbReference>
<dbReference type="GO" id="GO:0002250">
    <property type="term" value="P:adaptive immune response"/>
    <property type="evidence" value="ECO:0007669"/>
    <property type="project" value="UniProtKB-KW"/>
</dbReference>
<dbReference type="GO" id="GO:0007596">
    <property type="term" value="P:blood coagulation"/>
    <property type="evidence" value="ECO:0007669"/>
    <property type="project" value="UniProtKB-KW"/>
</dbReference>
<dbReference type="GO" id="GO:0045087">
    <property type="term" value="P:innate immune response"/>
    <property type="evidence" value="ECO:0007669"/>
    <property type="project" value="UniProtKB-KW"/>
</dbReference>
<keyword id="KW-1064">Adaptive immunity</keyword>
<keyword id="KW-0094">Blood coagulation</keyword>
<keyword id="KW-0175">Coiled coil</keyword>
<keyword id="KW-0903">Direct protein sequencing</keyword>
<keyword id="KW-1015">Disulfide bond</keyword>
<keyword id="KW-0356">Hemostasis</keyword>
<keyword id="KW-0391">Immunity</keyword>
<keyword id="KW-0399">Innate immunity</keyword>
<keyword id="KW-0964">Secreted</keyword>
<protein>
    <recommendedName>
        <fullName>Fibrinogen alpha chain</fullName>
    </recommendedName>
    <component>
        <recommendedName>
            <fullName>Fibrinopeptide A</fullName>
        </recommendedName>
    </component>
</protein>
<gene>
    <name type="primary">FGA</name>
</gene>
<organism>
    <name type="scientific">Lama glama</name>
    <name type="common">Llama</name>
    <dbReference type="NCBI Taxonomy" id="9844"/>
    <lineage>
        <taxon>Eukaryota</taxon>
        <taxon>Metazoa</taxon>
        <taxon>Chordata</taxon>
        <taxon>Craniata</taxon>
        <taxon>Vertebrata</taxon>
        <taxon>Euteleostomi</taxon>
        <taxon>Mammalia</taxon>
        <taxon>Eutheria</taxon>
        <taxon>Laurasiatheria</taxon>
        <taxon>Artiodactyla</taxon>
        <taxon>Tylopoda</taxon>
        <taxon>Camelidae</taxon>
        <taxon>Lama</taxon>
    </lineage>
</organism>
<feature type="peptide" id="PRO_0000009024" description="Fibrinopeptide A">
    <location>
        <begin position="1"/>
        <end position="18"/>
    </location>
</feature>
<feature type="non-terminal residue">
    <location>
        <position position="18"/>
    </location>
</feature>
<comment type="function">
    <text evidence="1">Cleaved by the protease thrombin to yield monomers which, together with fibrinogen beta (FGB) and fibrinogen gamma (FGG), polymerize to form an insoluble fibrin matrix. Fibrin has a major function in hemostasis as one of the primary components of blood clots. In addition, functions during the early stages of wound repair to stabilize the lesion and guide cell migration during re-epithelialization. Was originally thought to be essential for platelet aggregation, based on in vitro studies using anticoagulated blood. However, subsequent studies have shown that it is not absolutely required for thrombus formation in vivo. Enhances expression of SELP in activated platelets via an ITGB3-dependent pathway. Maternal fibrinogen is essential for successful pregnancy. Fibrin deposition is also associated with infection, where it protects against IFNG-mediated hemorrhage. May also facilitate the immune response via both innate and T-cell mediated pathways.</text>
</comment>
<comment type="subunit">
    <text evidence="2">Heterohexamer; disulfide linked. Contains 2 sets of 3 non-identical chains (alpha, beta and gamma). The 2 heterotrimers are in head to head conformation with the N-termini in a small central domain (By similarity).</text>
</comment>
<comment type="subcellular location">
    <subcellularLocation>
        <location>Secreted</location>
    </subcellularLocation>
</comment>
<comment type="domain">
    <text evidence="2">A long coiled coil structure formed by 3 polypeptide chains connects the central nodule to the C-terminal domains (distal nodules). The long C-terminal ends of the alpha chains fold back, contributing a fourth strand to the coiled coil structure.</text>
</comment>
<comment type="PTM">
    <text>Conversion of fibrinogen to fibrin is triggered by thrombin, which cleaves fibrinopeptides A and B from alpha and beta chains, and thus exposes the N-terminal polymerization sites responsible for the formation of the soft clot. The soft clot is converted into the hard clot by factor XIIIA which catalyzes the epsilon-(gamma-glutamyl)lysine cross-linking between gamma chains (stronger) and between alpha chains (weaker) of different monomers.</text>
</comment>
<comment type="PTM">
    <text>Forms F13A-mediated cross-links between a glutamine and the epsilon-amino group of a lysine residue, forming fibronectin-fibrinogen heteropolymers.</text>
</comment>
<proteinExistence type="evidence at protein level"/>
<reference key="1">
    <citation type="journal article" date="1965" name="Acta Chem. Scand.">
        <title>Studies on fibrinopeptides from mammals.</title>
        <authorList>
            <person name="Blombaeck B."/>
            <person name="Blombaeck M."/>
            <person name="Grondahl N.J."/>
        </authorList>
    </citation>
    <scope>PROTEIN SEQUENCE</scope>
</reference>
<name>FIBA_LAMGL</name>